<organism>
    <name type="scientific">Arabidopsis thaliana</name>
    <name type="common">Mouse-ear cress</name>
    <dbReference type="NCBI Taxonomy" id="3702"/>
    <lineage>
        <taxon>Eukaryota</taxon>
        <taxon>Viridiplantae</taxon>
        <taxon>Streptophyta</taxon>
        <taxon>Embryophyta</taxon>
        <taxon>Tracheophyta</taxon>
        <taxon>Spermatophyta</taxon>
        <taxon>Magnoliopsida</taxon>
        <taxon>eudicotyledons</taxon>
        <taxon>Gunneridae</taxon>
        <taxon>Pentapetalae</taxon>
        <taxon>rosids</taxon>
        <taxon>malvids</taxon>
        <taxon>Brassicales</taxon>
        <taxon>Brassicaceae</taxon>
        <taxon>Camelineae</taxon>
        <taxon>Arabidopsis</taxon>
    </lineage>
</organism>
<evidence type="ECO:0000250" key="1">
    <source>
        <dbReference type="UniProtKB" id="O64879"/>
    </source>
</evidence>
<evidence type="ECO:0000250" key="2">
    <source>
        <dbReference type="UniProtKB" id="Q1XH05"/>
    </source>
</evidence>
<evidence type="ECO:0000250" key="3">
    <source>
        <dbReference type="UniProtKB" id="Q7XSK0"/>
    </source>
</evidence>
<evidence type="ECO:0000250" key="4">
    <source>
        <dbReference type="UniProtKB" id="Q9SPP9"/>
    </source>
</evidence>
<evidence type="ECO:0000255" key="5"/>
<evidence type="ECO:0000255" key="6">
    <source>
        <dbReference type="PROSITE-ProRule" id="PRU00498"/>
    </source>
</evidence>
<evidence type="ECO:0000269" key="7">
    <source>
    </source>
</evidence>
<evidence type="ECO:0000303" key="8">
    <source>
    </source>
</evidence>
<evidence type="ECO:0000303" key="9">
    <source>
    </source>
</evidence>
<evidence type="ECO:0000305" key="10"/>
<evidence type="ECO:0000312" key="11">
    <source>
        <dbReference type="Araport" id="AT3G60130"/>
    </source>
</evidence>
<evidence type="ECO:0000312" key="12">
    <source>
        <dbReference type="EMBL" id="CAB75928.1"/>
    </source>
</evidence>
<protein>
    <recommendedName>
        <fullName evidence="9">Beta-glucosidase 16</fullName>
        <shortName evidence="9">AtBGLU16</shortName>
        <ecNumber evidence="1">3.2.1.21</ecNumber>
    </recommendedName>
    <alternativeName>
        <fullName evidence="8">Protein YELLOW-LEAF-SPECIFIC GENE 1</fullName>
    </alternativeName>
</protein>
<reference key="1">
    <citation type="journal article" date="2000" name="Nature">
        <title>Sequence and analysis of chromosome 3 of the plant Arabidopsis thaliana.</title>
        <authorList>
            <person name="Salanoubat M."/>
            <person name="Lemcke K."/>
            <person name="Rieger M."/>
            <person name="Ansorge W."/>
            <person name="Unseld M."/>
            <person name="Fartmann B."/>
            <person name="Valle G."/>
            <person name="Bloecker H."/>
            <person name="Perez-Alonso M."/>
            <person name="Obermaier B."/>
            <person name="Delseny M."/>
            <person name="Boutry M."/>
            <person name="Grivell L.A."/>
            <person name="Mache R."/>
            <person name="Puigdomenech P."/>
            <person name="De Simone V."/>
            <person name="Choisne N."/>
            <person name="Artiguenave F."/>
            <person name="Robert C."/>
            <person name="Brottier P."/>
            <person name="Wincker P."/>
            <person name="Cattolico L."/>
            <person name="Weissenbach J."/>
            <person name="Saurin W."/>
            <person name="Quetier F."/>
            <person name="Schaefer M."/>
            <person name="Mueller-Auer S."/>
            <person name="Gabel C."/>
            <person name="Fuchs M."/>
            <person name="Benes V."/>
            <person name="Wurmbach E."/>
            <person name="Drzonek H."/>
            <person name="Erfle H."/>
            <person name="Jordan N."/>
            <person name="Bangert S."/>
            <person name="Wiedelmann R."/>
            <person name="Kranz H."/>
            <person name="Voss H."/>
            <person name="Holland R."/>
            <person name="Brandt P."/>
            <person name="Nyakatura G."/>
            <person name="Vezzi A."/>
            <person name="D'Angelo M."/>
            <person name="Pallavicini A."/>
            <person name="Toppo S."/>
            <person name="Simionati B."/>
            <person name="Conrad A."/>
            <person name="Hornischer K."/>
            <person name="Kauer G."/>
            <person name="Loehnert T.-H."/>
            <person name="Nordsiek G."/>
            <person name="Reichelt J."/>
            <person name="Scharfe M."/>
            <person name="Schoen O."/>
            <person name="Bargues M."/>
            <person name="Terol J."/>
            <person name="Climent J."/>
            <person name="Navarro P."/>
            <person name="Collado C."/>
            <person name="Perez-Perez A."/>
            <person name="Ottenwaelder B."/>
            <person name="Duchemin D."/>
            <person name="Cooke R."/>
            <person name="Laudie M."/>
            <person name="Berger-Llauro C."/>
            <person name="Purnelle B."/>
            <person name="Masuy D."/>
            <person name="de Haan M."/>
            <person name="Maarse A.C."/>
            <person name="Alcaraz J.-P."/>
            <person name="Cottet A."/>
            <person name="Casacuberta E."/>
            <person name="Monfort A."/>
            <person name="Argiriou A."/>
            <person name="Flores M."/>
            <person name="Liguori R."/>
            <person name="Vitale D."/>
            <person name="Mannhaupt G."/>
            <person name="Haase D."/>
            <person name="Schoof H."/>
            <person name="Rudd S."/>
            <person name="Zaccaria P."/>
            <person name="Mewes H.-W."/>
            <person name="Mayer K.F.X."/>
            <person name="Kaul S."/>
            <person name="Town C.D."/>
            <person name="Koo H.L."/>
            <person name="Tallon L.J."/>
            <person name="Jenkins J."/>
            <person name="Rooney T."/>
            <person name="Rizzo M."/>
            <person name="Walts A."/>
            <person name="Utterback T."/>
            <person name="Fujii C.Y."/>
            <person name="Shea T.P."/>
            <person name="Creasy T.H."/>
            <person name="Haas B."/>
            <person name="Maiti R."/>
            <person name="Wu D."/>
            <person name="Peterson J."/>
            <person name="Van Aken S."/>
            <person name="Pai G."/>
            <person name="Militscher J."/>
            <person name="Sellers P."/>
            <person name="Gill J.E."/>
            <person name="Feldblyum T.V."/>
            <person name="Preuss D."/>
            <person name="Lin X."/>
            <person name="Nierman W.C."/>
            <person name="Salzberg S.L."/>
            <person name="White O."/>
            <person name="Venter J.C."/>
            <person name="Fraser C.M."/>
            <person name="Kaneko T."/>
            <person name="Nakamura Y."/>
            <person name="Sato S."/>
            <person name="Kato T."/>
            <person name="Asamizu E."/>
            <person name="Sasamoto S."/>
            <person name="Kimura T."/>
            <person name="Idesawa K."/>
            <person name="Kawashima K."/>
            <person name="Kishida Y."/>
            <person name="Kiyokawa C."/>
            <person name="Kohara M."/>
            <person name="Matsumoto M."/>
            <person name="Matsuno A."/>
            <person name="Muraki A."/>
            <person name="Nakayama S."/>
            <person name="Nakazaki N."/>
            <person name="Shinpo S."/>
            <person name="Takeuchi C."/>
            <person name="Wada T."/>
            <person name="Watanabe A."/>
            <person name="Yamada M."/>
            <person name="Yasuda M."/>
            <person name="Tabata S."/>
        </authorList>
    </citation>
    <scope>NUCLEOTIDE SEQUENCE [LARGE SCALE GENOMIC DNA]</scope>
    <source>
        <strain>cv. Columbia</strain>
    </source>
</reference>
<reference key="2">
    <citation type="journal article" date="2017" name="Plant J.">
        <title>Araport11: a complete reannotation of the Arabidopsis thaliana reference genome.</title>
        <authorList>
            <person name="Cheng C.Y."/>
            <person name="Krishnakumar V."/>
            <person name="Chan A.P."/>
            <person name="Thibaud-Nissen F."/>
            <person name="Schobel S."/>
            <person name="Town C.D."/>
        </authorList>
    </citation>
    <scope>GENOME REANNOTATION</scope>
    <source>
        <strain>cv. Columbia</strain>
    </source>
</reference>
<reference key="3">
    <citation type="journal article" date="2003" name="Science">
        <title>Empirical analysis of transcriptional activity in the Arabidopsis genome.</title>
        <authorList>
            <person name="Yamada K."/>
            <person name="Lim J."/>
            <person name="Dale J.M."/>
            <person name="Chen H."/>
            <person name="Shinn P."/>
            <person name="Palm C.J."/>
            <person name="Southwick A.M."/>
            <person name="Wu H.C."/>
            <person name="Kim C.J."/>
            <person name="Nguyen M."/>
            <person name="Pham P.K."/>
            <person name="Cheuk R.F."/>
            <person name="Karlin-Newmann G."/>
            <person name="Liu S.X."/>
            <person name="Lam B."/>
            <person name="Sakano H."/>
            <person name="Wu T."/>
            <person name="Yu G."/>
            <person name="Miranda M."/>
            <person name="Quach H.L."/>
            <person name="Tripp M."/>
            <person name="Chang C.H."/>
            <person name="Lee J.M."/>
            <person name="Toriumi M.J."/>
            <person name="Chan M.M."/>
            <person name="Tang C.C."/>
            <person name="Onodera C.S."/>
            <person name="Deng J.M."/>
            <person name="Akiyama K."/>
            <person name="Ansari Y."/>
            <person name="Arakawa T."/>
            <person name="Banh J."/>
            <person name="Banno F."/>
            <person name="Bowser L."/>
            <person name="Brooks S.Y."/>
            <person name="Carninci P."/>
            <person name="Chao Q."/>
            <person name="Choy N."/>
            <person name="Enju A."/>
            <person name="Goldsmith A.D."/>
            <person name="Gurjal M."/>
            <person name="Hansen N.F."/>
            <person name="Hayashizaki Y."/>
            <person name="Johnson-Hopson C."/>
            <person name="Hsuan V.W."/>
            <person name="Iida K."/>
            <person name="Karnes M."/>
            <person name="Khan S."/>
            <person name="Koesema E."/>
            <person name="Ishida J."/>
            <person name="Jiang P.X."/>
            <person name="Jones T."/>
            <person name="Kawai J."/>
            <person name="Kamiya A."/>
            <person name="Meyers C."/>
            <person name="Nakajima M."/>
            <person name="Narusaka M."/>
            <person name="Seki M."/>
            <person name="Sakurai T."/>
            <person name="Satou M."/>
            <person name="Tamse R."/>
            <person name="Vaysberg M."/>
            <person name="Wallender E.K."/>
            <person name="Wong C."/>
            <person name="Yamamura Y."/>
            <person name="Yuan S."/>
            <person name="Shinozaki K."/>
            <person name="Davis R.W."/>
            <person name="Theologis A."/>
            <person name="Ecker J.R."/>
        </authorList>
    </citation>
    <scope>NUCLEOTIDE SEQUENCE [LARGE SCALE MRNA] (ISOFORM 1)</scope>
    <source>
        <strain>cv. Columbia</strain>
    </source>
</reference>
<reference key="4">
    <citation type="journal article" date="2001" name="Plant Cell Physiol.">
        <title>Isolation and RNA gel blot analysis of genes that could serve as potential molecular markers for leaf senescence in Arabidopsis thaliana.</title>
        <authorList>
            <person name="Yoshida S."/>
            <person name="Ito M."/>
            <person name="Nishida I."/>
            <person name="Watanabe A."/>
        </authorList>
    </citation>
    <scope>NUCLEOTIDE SEQUENCE [MRNA] OF 315-510 (ISOFORM 1)</scope>
    <scope>TISSUE SPECIFICITY</scope>
    <scope>DEVELOPMENTAL STAGE</scope>
    <scope>INDUCTION</scope>
    <source>
        <tissue>Leaf</tissue>
    </source>
</reference>
<reference key="5">
    <citation type="journal article" date="2004" name="Plant Mol. Biol.">
        <title>Functional genomic analysis of Arabidopsis thaliana glycoside hydrolase family 1.</title>
        <authorList>
            <person name="Xu Z."/>
            <person name="Escamilla-Trevino L.L."/>
            <person name="Zeng L."/>
            <person name="Lalgondar M."/>
            <person name="Bevan D.R."/>
            <person name="Winkel B.S.J."/>
            <person name="Mohamed A."/>
            <person name="Cheng C.-L."/>
            <person name="Shih M.-C."/>
            <person name="Poulton J.E."/>
            <person name="Esen A."/>
        </authorList>
    </citation>
    <scope>GENE FAMILY</scope>
    <scope>NOMENCLATURE</scope>
</reference>
<accession>Q9M1D0</accession>
<accession>Q9CAZ8</accession>
<sequence>MRGKFLSLLLLITLACIGVSAKKHSTRPRLRRNDFPQDFVFGSATSAYQCEGAAHEDGRGPSIWDSFSEKFPEKIMDGSNGSIADDSYNLYKEDVNLLHQIGFDAYRFSISWSRILPRGTLKGGINQAGIEYYNNLINQLISKGVKPFVTLFHWDLPDALENAYGGLLGDEFVNDFRDYAELCFQKFGDRVKQWTTLNEPYTMVHEGYITGQKAPGRCSNFYKPDCLGGDAATEPYIVGHNLLLAHGVAVKVYREKYQATQKGEIGIALNTAWHYPYSDSYADRLAATRATAFTFDYFMEPIVYGRYPIEMVSHVKDGRLPTFTPEESEMLKGSYDFIGVNYYSSLYAKDVPCATENITMTTDSCVSLVGERNGVPIGPAAGSDWLLIYPKGIRDLLLHAKFRYNDPVLYITENGVDEANIGKIFLNDDLRIDYYAHHLKMVSDAISIGVNVKGYFAWSLMDNFEWSEGYTVRFGLVFVDFEDGRKRYLKKSAKWFRRLLKGAHGGTNEQVAVI</sequence>
<comment type="catalytic activity">
    <reaction evidence="1">
        <text>Hydrolysis of terminal, non-reducing beta-D-glucosyl residues with release of beta-D-glucose.</text>
        <dbReference type="EC" id="3.2.1.21"/>
    </reaction>
</comment>
<comment type="alternative products">
    <event type="alternative splicing"/>
    <isoform>
        <id>Q9M1D0-1</id>
        <name>1</name>
        <sequence type="displayed"/>
    </isoform>
    <isoform>
        <id>Q9M1D0-2</id>
        <name>2</name>
        <sequence type="described" ref="VSP_038455"/>
    </isoform>
</comment>
<comment type="tissue specificity">
    <text evidence="7">Expressed at low levels in cauline leaves and flowers.</text>
</comment>
<comment type="developmental stage">
    <text evidence="7">Up-regulated in leaves during natural senescence.</text>
</comment>
<comment type="induction">
    <text evidence="7">By abscisic acid (ABA) and dark.</text>
</comment>
<comment type="similarity">
    <text evidence="10">Belongs to the glycosyl hydrolase 1 family.</text>
</comment>
<dbReference type="EC" id="3.2.1.21" evidence="1"/>
<dbReference type="EMBL" id="AL138658">
    <property type="protein sequence ID" value="CAB75928.1"/>
    <property type="molecule type" value="Genomic_DNA"/>
</dbReference>
<dbReference type="EMBL" id="CP002686">
    <property type="protein sequence ID" value="AEE80014.1"/>
    <property type="molecule type" value="Genomic_DNA"/>
</dbReference>
<dbReference type="EMBL" id="AY045953">
    <property type="protein sequence ID" value="AAK76627.1"/>
    <property type="molecule type" value="mRNA"/>
</dbReference>
<dbReference type="EMBL" id="AY113935">
    <property type="protein sequence ID" value="AAM44983.1"/>
    <property type="molecule type" value="mRNA"/>
</dbReference>
<dbReference type="EMBL" id="AB047804">
    <property type="protein sequence ID" value="BAB32881.1"/>
    <property type="molecule type" value="mRNA"/>
</dbReference>
<dbReference type="PIR" id="T47837">
    <property type="entry name" value="T47837"/>
</dbReference>
<dbReference type="RefSeq" id="NP_191572.1">
    <molecule id="Q9M1D0-1"/>
    <property type="nucleotide sequence ID" value="NM_115876.5"/>
</dbReference>
<dbReference type="SMR" id="Q9M1D0"/>
<dbReference type="BioGRID" id="10497">
    <property type="interactions" value="1"/>
</dbReference>
<dbReference type="FunCoup" id="Q9M1D0">
    <property type="interactions" value="630"/>
</dbReference>
<dbReference type="IntAct" id="Q9M1D0">
    <property type="interactions" value="1"/>
</dbReference>
<dbReference type="STRING" id="3702.Q9M1D0"/>
<dbReference type="CAZy" id="GH1">
    <property type="family name" value="Glycoside Hydrolase Family 1"/>
</dbReference>
<dbReference type="GlyCosmos" id="Q9M1D0">
    <property type="glycosylation" value="2 sites, No reported glycans"/>
</dbReference>
<dbReference type="GlyGen" id="Q9M1D0">
    <property type="glycosylation" value="2 sites"/>
</dbReference>
<dbReference type="iPTMnet" id="Q9M1D0"/>
<dbReference type="PaxDb" id="3702-AT3G60130.1"/>
<dbReference type="ProteomicsDB" id="240686">
    <molecule id="Q9M1D0-1"/>
</dbReference>
<dbReference type="EnsemblPlants" id="AT3G60130.1">
    <molecule id="Q9M1D0-1"/>
    <property type="protein sequence ID" value="AT3G60130.1"/>
    <property type="gene ID" value="AT3G60130"/>
</dbReference>
<dbReference type="GeneID" id="825183"/>
<dbReference type="Gramene" id="AT3G60130.1">
    <molecule id="Q9M1D0-1"/>
    <property type="protein sequence ID" value="AT3G60130.1"/>
    <property type="gene ID" value="AT3G60130"/>
</dbReference>
<dbReference type="KEGG" id="ath:AT3G60130"/>
<dbReference type="Araport" id="AT3G60130"/>
<dbReference type="TAIR" id="AT3G60130">
    <property type="gene designation" value="BGLU16"/>
</dbReference>
<dbReference type="eggNOG" id="KOG0626">
    <property type="taxonomic scope" value="Eukaryota"/>
</dbReference>
<dbReference type="HOGENOM" id="CLU_001859_1_0_1"/>
<dbReference type="InParanoid" id="Q9M1D0"/>
<dbReference type="OMA" id="EEGYFYP"/>
<dbReference type="OrthoDB" id="65569at2759"/>
<dbReference type="PhylomeDB" id="Q9M1D0"/>
<dbReference type="BioCyc" id="ARA:AT3G60130-MONOMER"/>
<dbReference type="PRO" id="PR:Q9M1D0"/>
<dbReference type="Proteomes" id="UP000006548">
    <property type="component" value="Chromosome 3"/>
</dbReference>
<dbReference type="ExpressionAtlas" id="Q9M1D0">
    <property type="expression patterns" value="baseline and differential"/>
</dbReference>
<dbReference type="GO" id="GO:0008422">
    <property type="term" value="F:beta-glucosidase activity"/>
    <property type="evidence" value="ECO:0007669"/>
    <property type="project" value="UniProtKB-EC"/>
</dbReference>
<dbReference type="GO" id="GO:0005975">
    <property type="term" value="P:carbohydrate metabolic process"/>
    <property type="evidence" value="ECO:0007669"/>
    <property type="project" value="InterPro"/>
</dbReference>
<dbReference type="FunFam" id="3.20.20.80:FF:000022">
    <property type="entry name" value="Beta-glucosidase 11"/>
    <property type="match status" value="1"/>
</dbReference>
<dbReference type="Gene3D" id="3.20.20.80">
    <property type="entry name" value="Glycosidases"/>
    <property type="match status" value="1"/>
</dbReference>
<dbReference type="InterPro" id="IPR001360">
    <property type="entry name" value="Glyco_hydro_1"/>
</dbReference>
<dbReference type="InterPro" id="IPR033132">
    <property type="entry name" value="Glyco_hydro_1_N_CS"/>
</dbReference>
<dbReference type="InterPro" id="IPR017853">
    <property type="entry name" value="Glycoside_hydrolase_SF"/>
</dbReference>
<dbReference type="PANTHER" id="PTHR10353:SF332">
    <property type="entry name" value="BETA-GLUCOSIDASE 16"/>
    <property type="match status" value="1"/>
</dbReference>
<dbReference type="PANTHER" id="PTHR10353">
    <property type="entry name" value="GLYCOSYL HYDROLASE"/>
    <property type="match status" value="1"/>
</dbReference>
<dbReference type="Pfam" id="PF00232">
    <property type="entry name" value="Glyco_hydro_1"/>
    <property type="match status" value="1"/>
</dbReference>
<dbReference type="PRINTS" id="PR00131">
    <property type="entry name" value="GLHYDRLASE1"/>
</dbReference>
<dbReference type="SUPFAM" id="SSF51445">
    <property type="entry name" value="(Trans)glycosidases"/>
    <property type="match status" value="1"/>
</dbReference>
<dbReference type="PROSITE" id="PS00653">
    <property type="entry name" value="GLYCOSYL_HYDROL_F1_2"/>
    <property type="match status" value="1"/>
</dbReference>
<gene>
    <name evidence="9" type="primary">BGLU16</name>
    <name evidence="8" type="synonym">YLS1</name>
    <name evidence="11" type="ordered locus">At3g60130</name>
    <name evidence="12" type="ORF">T2O9.110</name>
</gene>
<name>BGL16_ARATH</name>
<keyword id="KW-0025">Alternative splicing</keyword>
<keyword id="KW-1015">Disulfide bond</keyword>
<keyword id="KW-0325">Glycoprotein</keyword>
<keyword id="KW-0326">Glycosidase</keyword>
<keyword id="KW-0378">Hydrolase</keyword>
<keyword id="KW-1185">Reference proteome</keyword>
<keyword id="KW-0732">Signal</keyword>
<proteinExistence type="evidence at transcript level"/>
<feature type="signal peptide" evidence="5">
    <location>
        <begin position="1"/>
        <end position="21"/>
    </location>
</feature>
<feature type="chain" id="PRO_0000389579" description="Beta-glucosidase 16">
    <location>
        <begin position="22"/>
        <end position="514"/>
    </location>
</feature>
<feature type="active site" description="Proton donor" evidence="3">
    <location>
        <position position="199"/>
    </location>
</feature>
<feature type="active site" description="Nucleophile" evidence="3">
    <location>
        <position position="413"/>
    </location>
</feature>
<feature type="binding site" evidence="3">
    <location>
        <position position="49"/>
    </location>
    <ligand>
        <name>a beta-D-glucoside</name>
        <dbReference type="ChEBI" id="CHEBI:22798"/>
    </ligand>
</feature>
<feature type="binding site" evidence="3">
    <location>
        <position position="153"/>
    </location>
    <ligand>
        <name>a beta-D-glucoside</name>
        <dbReference type="ChEBI" id="CHEBI:22798"/>
    </ligand>
</feature>
<feature type="binding site" evidence="3">
    <location>
        <begin position="198"/>
        <end position="199"/>
    </location>
    <ligand>
        <name>a beta-D-glucoside</name>
        <dbReference type="ChEBI" id="CHEBI:22798"/>
    </ligand>
</feature>
<feature type="binding site" evidence="3">
    <location>
        <position position="343"/>
    </location>
    <ligand>
        <name>a beta-D-glucoside</name>
        <dbReference type="ChEBI" id="CHEBI:22798"/>
    </ligand>
</feature>
<feature type="binding site" evidence="4">
    <location>
        <position position="413"/>
    </location>
    <ligand>
        <name>a beta-D-glucoside</name>
        <dbReference type="ChEBI" id="CHEBI:22798"/>
    </ligand>
</feature>
<feature type="binding site" evidence="3">
    <location>
        <position position="458"/>
    </location>
    <ligand>
        <name>a beta-D-glucoside</name>
        <dbReference type="ChEBI" id="CHEBI:22798"/>
    </ligand>
</feature>
<feature type="binding site" evidence="3">
    <location>
        <begin position="465"/>
        <end position="466"/>
    </location>
    <ligand>
        <name>a beta-D-glucoside</name>
        <dbReference type="ChEBI" id="CHEBI:22798"/>
    </ligand>
</feature>
<feature type="binding site" evidence="2">
    <location>
        <position position="474"/>
    </location>
    <ligand>
        <name>a beta-D-glucoside</name>
        <dbReference type="ChEBI" id="CHEBI:22798"/>
    </ligand>
</feature>
<feature type="glycosylation site" description="N-linked (GlcNAc...) asparagine" evidence="6">
    <location>
        <position position="80"/>
    </location>
</feature>
<feature type="glycosylation site" description="N-linked (GlcNAc...) asparagine" evidence="6">
    <location>
        <position position="357"/>
    </location>
</feature>
<feature type="disulfide bond" evidence="3">
    <location>
        <begin position="218"/>
        <end position="226"/>
    </location>
</feature>
<feature type="splice variant" id="VSP_038455" description="In isoform 2." evidence="10">
    <location>
        <begin position="381"/>
        <end position="391"/>
    </location>
</feature>